<comment type="function">
    <text>When expressed in E.coli and M.smegmatis, HbO increases oxygen uptake. Membrane vesicles of E.coli carrying HbO show a respiration activity about twice that of membranes without HbO. HbO seems to interact with a terminal oxidase. Therefore, HbO could participate in oxygen/electron-transfer process, suggesting a function related to the facilitation of oxygen transfer during aerobic metabolism of M.tuberculosis.</text>
</comment>
<comment type="cofactor">
    <cofactor>
        <name>heme</name>
        <dbReference type="ChEBI" id="CHEBI:30413"/>
    </cofactor>
    <text>Binds 1 heme group per subunit.</text>
</comment>
<comment type="subunit">
    <text>Homododecamer.</text>
</comment>
<comment type="subcellular location">
    <subcellularLocation>
        <location evidence="2">Cell membrane</location>
        <topology evidence="2">Peripheral membrane protein</topology>
    </subcellularLocation>
</comment>
<comment type="PTM">
    <text>Contains L-DOPA (3',4'-dihydroxyphenylalanine).</text>
</comment>
<comment type="similarity">
    <text evidence="2">Belongs to the truncated hemoglobin family. Group II subfamily.</text>
</comment>
<gene>
    <name type="primary">glbO</name>
    <name type="ordered locus">Rv2470</name>
    <name type="ORF">MTV008.26</name>
</gene>
<accession>P9WN23</accession>
<accession>L0TBB1</accession>
<accession>O53197</accession>
<accession>P0A595</accession>
<keyword id="KW-0002">3D-structure</keyword>
<keyword id="KW-1003">Cell membrane</keyword>
<keyword id="KW-0349">Heme</keyword>
<keyword id="KW-0379">Hydroxylation</keyword>
<keyword id="KW-0408">Iron</keyword>
<keyword id="KW-0472">Membrane</keyword>
<keyword id="KW-0479">Metal-binding</keyword>
<keyword id="KW-0561">Oxygen transport</keyword>
<keyword id="KW-1185">Reference proteome</keyword>
<keyword id="KW-0813">Transport</keyword>
<reference key="1">
    <citation type="journal article" date="1998" name="Nature">
        <title>Deciphering the biology of Mycobacterium tuberculosis from the complete genome sequence.</title>
        <authorList>
            <person name="Cole S.T."/>
            <person name="Brosch R."/>
            <person name="Parkhill J."/>
            <person name="Garnier T."/>
            <person name="Churcher C.M."/>
            <person name="Harris D.E."/>
            <person name="Gordon S.V."/>
            <person name="Eiglmeier K."/>
            <person name="Gas S."/>
            <person name="Barry C.E. III"/>
            <person name="Tekaia F."/>
            <person name="Badcock K."/>
            <person name="Basham D."/>
            <person name="Brown D."/>
            <person name="Chillingworth T."/>
            <person name="Connor R."/>
            <person name="Davies R.M."/>
            <person name="Devlin K."/>
            <person name="Feltwell T."/>
            <person name="Gentles S."/>
            <person name="Hamlin N."/>
            <person name="Holroyd S."/>
            <person name="Hornsby T."/>
            <person name="Jagels K."/>
            <person name="Krogh A."/>
            <person name="McLean J."/>
            <person name="Moule S."/>
            <person name="Murphy L.D."/>
            <person name="Oliver S."/>
            <person name="Osborne J."/>
            <person name="Quail M.A."/>
            <person name="Rajandream M.A."/>
            <person name="Rogers J."/>
            <person name="Rutter S."/>
            <person name="Seeger K."/>
            <person name="Skelton S."/>
            <person name="Squares S."/>
            <person name="Squares R."/>
            <person name="Sulston J.E."/>
            <person name="Taylor K."/>
            <person name="Whitehead S."/>
            <person name="Barrell B.G."/>
        </authorList>
    </citation>
    <scope>NUCLEOTIDE SEQUENCE [LARGE SCALE GENOMIC DNA]</scope>
    <source>
        <strain>ATCC 25618 / H37Rv</strain>
    </source>
</reference>
<reference key="2">
    <citation type="journal article" date="2002" name="J. Biol. Chem.">
        <title>Mycobacterium tuberculosis hemoglobin HbO associates with membranes and stimulates cellular respiration of recombinant Escherichia coli.</title>
        <authorList>
            <person name="Pathania R."/>
            <person name="Navani N.K."/>
            <person name="Rajamohan G."/>
            <person name="Dikshit K.L."/>
        </authorList>
    </citation>
    <scope>CHARACTERIZATION</scope>
    <source>
        <strain>ATCC 25618 / H37Rv</strain>
    </source>
</reference>
<reference key="3">
    <citation type="journal article" date="2011" name="Mol. Cell. Proteomics">
        <title>Proteogenomic analysis of Mycobacterium tuberculosis by high resolution mass spectrometry.</title>
        <authorList>
            <person name="Kelkar D.S."/>
            <person name="Kumar D."/>
            <person name="Kumar P."/>
            <person name="Balakrishnan L."/>
            <person name="Muthusamy B."/>
            <person name="Yadav A.K."/>
            <person name="Shrivastava P."/>
            <person name="Marimuthu A."/>
            <person name="Anand S."/>
            <person name="Sundaram H."/>
            <person name="Kingsbury R."/>
            <person name="Harsha H.C."/>
            <person name="Nair B."/>
            <person name="Prasad T.S."/>
            <person name="Chauhan D.S."/>
            <person name="Katoch K."/>
            <person name="Katoch V.M."/>
            <person name="Kumar P."/>
            <person name="Chaerkady R."/>
            <person name="Ramachandran S."/>
            <person name="Dash D."/>
            <person name="Pandey A."/>
        </authorList>
    </citation>
    <scope>IDENTIFICATION BY MASS SPECTROMETRY [LARGE SCALE ANALYSIS]</scope>
    <source>
        <strain>ATCC 25618 / H37Rv</strain>
    </source>
</reference>
<reference key="4">
    <citation type="journal article" date="2003" name="Proc. Natl. Acad. Sci. U.S.A.">
        <title>A TyrCD1/TrpG8 hydrogen bond network and a TyrB10TyrCD1 covalent link shape the heme distal site of Mycobacterium tuberculosis hemoglobin O.</title>
        <authorList>
            <person name="Milani M."/>
            <person name="Savard P.-Y."/>
            <person name="Ouellet H."/>
            <person name="Ascenzi P."/>
            <person name="Guertin M."/>
            <person name="Bolognesi M."/>
        </authorList>
    </citation>
    <scope>X-RAY CRYSTALLOGRAPHY (2.11 ANGSTROMS)</scope>
    <scope>HYDROXYLATION AT TYR-36</scope>
</reference>
<protein>
    <recommendedName>
        <fullName>Group 2 truncated hemoglobin GlbO</fullName>
    </recommendedName>
    <alternativeName>
        <fullName>Hemoglobin-like protein HbO</fullName>
    </alternativeName>
    <alternativeName>
        <fullName>Truncated hemoglobin</fullName>
        <shortName>trHbO</shortName>
    </alternativeName>
</protein>
<sequence>MPKSFYDAVGGAKTFDAIVSRFYAQVAEDEVLRRVYPEDDLAGAEERLRMFLEQYWGGPRTYSEQRGHPRLRMRHAPFRISLIERDAWLRCMHTAVASIDSETLDDEHRRELLDYLEMAAHSLVNSPF</sequence>
<organism>
    <name type="scientific">Mycobacterium tuberculosis (strain ATCC 25618 / H37Rv)</name>
    <dbReference type="NCBI Taxonomy" id="83332"/>
    <lineage>
        <taxon>Bacteria</taxon>
        <taxon>Bacillati</taxon>
        <taxon>Actinomycetota</taxon>
        <taxon>Actinomycetes</taxon>
        <taxon>Mycobacteriales</taxon>
        <taxon>Mycobacteriaceae</taxon>
        <taxon>Mycobacterium</taxon>
        <taxon>Mycobacterium tuberculosis complex</taxon>
    </lineage>
</organism>
<dbReference type="EMBL" id="AL123456">
    <property type="protein sequence ID" value="CCP45264.1"/>
    <property type="molecule type" value="Genomic_DNA"/>
</dbReference>
<dbReference type="PIR" id="E70866">
    <property type="entry name" value="E70866"/>
</dbReference>
<dbReference type="RefSeq" id="NP_216986.1">
    <property type="nucleotide sequence ID" value="NC_000962.3"/>
</dbReference>
<dbReference type="RefSeq" id="WP_003412688.1">
    <property type="nucleotide sequence ID" value="NZ_NVQJ01000024.1"/>
</dbReference>
<dbReference type="PDB" id="1NGK">
    <property type="method" value="X-ray"/>
    <property type="resolution" value="2.11 A"/>
    <property type="chains" value="A/B/C/D/E/F/G/H/I/J/K/L=1-128"/>
</dbReference>
<dbReference type="PDB" id="2QRW">
    <property type="method" value="X-ray"/>
    <property type="resolution" value="1.93 A"/>
    <property type="chains" value="A/B/C/D/E/F/G/H/I/J/K/L=1-128"/>
</dbReference>
<dbReference type="PDBsum" id="1NGK"/>
<dbReference type="PDBsum" id="2QRW"/>
<dbReference type="SMR" id="P9WN23"/>
<dbReference type="DIP" id="DIP-16963N"/>
<dbReference type="FunCoup" id="P9WN23">
    <property type="interactions" value="2"/>
</dbReference>
<dbReference type="STRING" id="83332.Rv2470"/>
<dbReference type="PaxDb" id="83332-Rv2470"/>
<dbReference type="DNASU" id="887743"/>
<dbReference type="GeneID" id="45426463"/>
<dbReference type="GeneID" id="887743"/>
<dbReference type="KEGG" id="mtu:Rv2470"/>
<dbReference type="KEGG" id="mtv:RVBD_2470"/>
<dbReference type="TubercuList" id="Rv2470"/>
<dbReference type="eggNOG" id="COG2346">
    <property type="taxonomic scope" value="Bacteria"/>
</dbReference>
<dbReference type="InParanoid" id="P9WN23"/>
<dbReference type="OrthoDB" id="9790913at2"/>
<dbReference type="PhylomeDB" id="P9WN23"/>
<dbReference type="EvolutionaryTrace" id="P9WN23"/>
<dbReference type="Proteomes" id="UP000001584">
    <property type="component" value="Chromosome"/>
</dbReference>
<dbReference type="GO" id="GO:0005886">
    <property type="term" value="C:plasma membrane"/>
    <property type="evidence" value="ECO:0000314"/>
    <property type="project" value="MTBBASE"/>
</dbReference>
<dbReference type="GO" id="GO:0020037">
    <property type="term" value="F:heme binding"/>
    <property type="evidence" value="ECO:0000314"/>
    <property type="project" value="MTBBASE"/>
</dbReference>
<dbReference type="GO" id="GO:0046872">
    <property type="term" value="F:metal ion binding"/>
    <property type="evidence" value="ECO:0007669"/>
    <property type="project" value="UniProtKB-KW"/>
</dbReference>
<dbReference type="GO" id="GO:0019825">
    <property type="term" value="F:oxygen binding"/>
    <property type="evidence" value="ECO:0000314"/>
    <property type="project" value="MTBBASE"/>
</dbReference>
<dbReference type="GO" id="GO:0005344">
    <property type="term" value="F:oxygen carrier activity"/>
    <property type="evidence" value="ECO:0007669"/>
    <property type="project" value="UniProtKB-KW"/>
</dbReference>
<dbReference type="GO" id="GO:0015671">
    <property type="term" value="P:oxygen transport"/>
    <property type="evidence" value="ECO:0000314"/>
    <property type="project" value="MTBBASE"/>
</dbReference>
<dbReference type="CDD" id="cd14771">
    <property type="entry name" value="TrHb2_Mt-trHbO-like_O"/>
    <property type="match status" value="1"/>
</dbReference>
<dbReference type="FunFam" id="1.10.490.10:FF:000004">
    <property type="entry name" value="Group 2 hemoglobin yjbI"/>
    <property type="match status" value="1"/>
</dbReference>
<dbReference type="Gene3D" id="1.10.490.10">
    <property type="entry name" value="Globins"/>
    <property type="match status" value="1"/>
</dbReference>
<dbReference type="InterPro" id="IPR044203">
    <property type="entry name" value="GlbO/GLB3-like"/>
</dbReference>
<dbReference type="InterPro" id="IPR009050">
    <property type="entry name" value="Globin-like_sf"/>
</dbReference>
<dbReference type="InterPro" id="IPR012292">
    <property type="entry name" value="Globin/Proto"/>
</dbReference>
<dbReference type="InterPro" id="IPR019795">
    <property type="entry name" value="Globin_bac-like_CS"/>
</dbReference>
<dbReference type="InterPro" id="IPR001486">
    <property type="entry name" value="Hemoglobin_trunc"/>
</dbReference>
<dbReference type="PANTHER" id="PTHR47366">
    <property type="entry name" value="TWO-ON-TWO HEMOGLOBIN-3"/>
    <property type="match status" value="1"/>
</dbReference>
<dbReference type="PANTHER" id="PTHR47366:SF1">
    <property type="entry name" value="TWO-ON-TWO HEMOGLOBIN-3"/>
    <property type="match status" value="1"/>
</dbReference>
<dbReference type="Pfam" id="PF01152">
    <property type="entry name" value="Bac_globin"/>
    <property type="match status" value="1"/>
</dbReference>
<dbReference type="SUPFAM" id="SSF46458">
    <property type="entry name" value="Globin-like"/>
    <property type="match status" value="1"/>
</dbReference>
<dbReference type="PROSITE" id="PS01213">
    <property type="entry name" value="GLOBIN_FAM_2"/>
    <property type="match status" value="1"/>
</dbReference>
<name>TRHBO_MYCTU</name>
<evidence type="ECO:0000269" key="1">
    <source>
    </source>
</evidence>
<evidence type="ECO:0000305" key="2"/>
<evidence type="ECO:0007829" key="3">
    <source>
        <dbReference type="PDB" id="2QRW"/>
    </source>
</evidence>
<feature type="chain" id="PRO_0000162643" description="Group 2 truncated hemoglobin GlbO">
    <location>
        <begin position="1"/>
        <end position="128"/>
    </location>
</feature>
<feature type="binding site" description="proximal binding residue">
    <location>
        <position position="75"/>
    </location>
    <ligand>
        <name>heme</name>
        <dbReference type="ChEBI" id="CHEBI:30413"/>
    </ligand>
    <ligandPart>
        <name>Fe</name>
        <dbReference type="ChEBI" id="CHEBI:18248"/>
    </ligandPart>
</feature>
<feature type="modified residue" description="3',4'-dihydroxyphenylalanine; alternate" evidence="1">
    <location>
        <position position="36"/>
    </location>
</feature>
<feature type="cross-link" description="Isodityrosine (Tyr-Tyr); alternate">
    <location>
        <begin position="23"/>
        <end position="36"/>
    </location>
</feature>
<feature type="helix" evidence="3">
    <location>
        <begin position="5"/>
        <end position="8"/>
    </location>
</feature>
<feature type="turn" evidence="3">
    <location>
        <begin position="9"/>
        <end position="11"/>
    </location>
</feature>
<feature type="helix" evidence="3">
    <location>
        <begin position="12"/>
        <end position="28"/>
    </location>
</feature>
<feature type="helix" evidence="3">
    <location>
        <begin position="30"/>
        <end position="35"/>
    </location>
</feature>
<feature type="helix" evidence="3">
    <location>
        <begin position="42"/>
        <end position="55"/>
    </location>
</feature>
<feature type="helix" evidence="3">
    <location>
        <begin position="61"/>
        <end position="66"/>
    </location>
</feature>
<feature type="helix" evidence="3">
    <location>
        <begin position="71"/>
        <end position="75"/>
    </location>
</feature>
<feature type="helix" evidence="3">
    <location>
        <begin position="82"/>
        <end position="97"/>
    </location>
</feature>
<feature type="turn" evidence="3">
    <location>
        <begin position="101"/>
        <end position="103"/>
    </location>
</feature>
<feature type="helix" evidence="3">
    <location>
        <begin position="106"/>
        <end position="122"/>
    </location>
</feature>
<proteinExistence type="evidence at protein level"/>